<feature type="chain" id="PRO_1000052297" description="Large ribosomal subunit protein uL24">
    <location>
        <begin position="1"/>
        <end position="109"/>
    </location>
</feature>
<organism>
    <name type="scientific">Rickettsia rickettsii (strain Sheila Smith)</name>
    <dbReference type="NCBI Taxonomy" id="392021"/>
    <lineage>
        <taxon>Bacteria</taxon>
        <taxon>Pseudomonadati</taxon>
        <taxon>Pseudomonadota</taxon>
        <taxon>Alphaproteobacteria</taxon>
        <taxon>Rickettsiales</taxon>
        <taxon>Rickettsiaceae</taxon>
        <taxon>Rickettsieae</taxon>
        <taxon>Rickettsia</taxon>
        <taxon>spotted fever group</taxon>
    </lineage>
</organism>
<proteinExistence type="inferred from homology"/>
<dbReference type="EMBL" id="CP000848">
    <property type="protein sequence ID" value="ABV76583.1"/>
    <property type="molecule type" value="Genomic_DNA"/>
</dbReference>
<dbReference type="RefSeq" id="WP_012151145.1">
    <property type="nucleotide sequence ID" value="NZ_CP121767.1"/>
</dbReference>
<dbReference type="SMR" id="A8GT58"/>
<dbReference type="GeneID" id="79937659"/>
<dbReference type="KEGG" id="rri:A1G_05500"/>
<dbReference type="HOGENOM" id="CLU_093315_2_0_5"/>
<dbReference type="Proteomes" id="UP000006832">
    <property type="component" value="Chromosome"/>
</dbReference>
<dbReference type="GO" id="GO:1990904">
    <property type="term" value="C:ribonucleoprotein complex"/>
    <property type="evidence" value="ECO:0007669"/>
    <property type="project" value="UniProtKB-KW"/>
</dbReference>
<dbReference type="GO" id="GO:0005840">
    <property type="term" value="C:ribosome"/>
    <property type="evidence" value="ECO:0007669"/>
    <property type="project" value="UniProtKB-KW"/>
</dbReference>
<dbReference type="GO" id="GO:0019843">
    <property type="term" value="F:rRNA binding"/>
    <property type="evidence" value="ECO:0007669"/>
    <property type="project" value="UniProtKB-UniRule"/>
</dbReference>
<dbReference type="GO" id="GO:0003735">
    <property type="term" value="F:structural constituent of ribosome"/>
    <property type="evidence" value="ECO:0007669"/>
    <property type="project" value="InterPro"/>
</dbReference>
<dbReference type="GO" id="GO:0006412">
    <property type="term" value="P:translation"/>
    <property type="evidence" value="ECO:0007669"/>
    <property type="project" value="UniProtKB-UniRule"/>
</dbReference>
<dbReference type="CDD" id="cd06089">
    <property type="entry name" value="KOW_RPL26"/>
    <property type="match status" value="1"/>
</dbReference>
<dbReference type="FunFam" id="2.30.30.30:FF:000004">
    <property type="entry name" value="50S ribosomal protein L24"/>
    <property type="match status" value="1"/>
</dbReference>
<dbReference type="Gene3D" id="2.30.30.30">
    <property type="match status" value="1"/>
</dbReference>
<dbReference type="HAMAP" id="MF_01326_B">
    <property type="entry name" value="Ribosomal_uL24_B"/>
    <property type="match status" value="1"/>
</dbReference>
<dbReference type="InterPro" id="IPR005824">
    <property type="entry name" value="KOW"/>
</dbReference>
<dbReference type="InterPro" id="IPR014722">
    <property type="entry name" value="Rib_uL2_dom2"/>
</dbReference>
<dbReference type="InterPro" id="IPR003256">
    <property type="entry name" value="Ribosomal_uL24"/>
</dbReference>
<dbReference type="InterPro" id="IPR005825">
    <property type="entry name" value="Ribosomal_uL24_CS"/>
</dbReference>
<dbReference type="InterPro" id="IPR041988">
    <property type="entry name" value="Ribosomal_uL24_KOW"/>
</dbReference>
<dbReference type="InterPro" id="IPR008991">
    <property type="entry name" value="Translation_prot_SH3-like_sf"/>
</dbReference>
<dbReference type="NCBIfam" id="TIGR01079">
    <property type="entry name" value="rplX_bact"/>
    <property type="match status" value="1"/>
</dbReference>
<dbReference type="PANTHER" id="PTHR12903">
    <property type="entry name" value="MITOCHONDRIAL RIBOSOMAL PROTEIN L24"/>
    <property type="match status" value="1"/>
</dbReference>
<dbReference type="Pfam" id="PF00467">
    <property type="entry name" value="KOW"/>
    <property type="match status" value="1"/>
</dbReference>
<dbReference type="Pfam" id="PF17136">
    <property type="entry name" value="ribosomal_L24"/>
    <property type="match status" value="1"/>
</dbReference>
<dbReference type="SMART" id="SM00739">
    <property type="entry name" value="KOW"/>
    <property type="match status" value="1"/>
</dbReference>
<dbReference type="SUPFAM" id="SSF50104">
    <property type="entry name" value="Translation proteins SH3-like domain"/>
    <property type="match status" value="1"/>
</dbReference>
<dbReference type="PROSITE" id="PS01108">
    <property type="entry name" value="RIBOSOMAL_L24"/>
    <property type="match status" value="1"/>
</dbReference>
<gene>
    <name evidence="1" type="primary">rplX</name>
    <name type="ordered locus">A1G_05500</name>
</gene>
<accession>A8GT58</accession>
<protein>
    <recommendedName>
        <fullName evidence="1">Large ribosomal subunit protein uL24</fullName>
    </recommendedName>
    <alternativeName>
        <fullName evidence="2">50S ribosomal protein L24</fullName>
    </alternativeName>
</protein>
<keyword id="KW-0687">Ribonucleoprotein</keyword>
<keyword id="KW-0689">Ribosomal protein</keyword>
<keyword id="KW-0694">RNA-binding</keyword>
<keyword id="KW-0699">rRNA-binding</keyword>
<name>RL24_RICRS</name>
<sequence>MIKLKVKKGDEVVVITGKHKGKKGKILKVFPEDSKVIVSGVNVVKKHTKPNQMSEGGIITKELPIHISNIAHIDPKTGNPTKVAFKFLEDGSKVRVAKKSGEIIGKEGK</sequence>
<comment type="function">
    <text evidence="1">One of two assembly initiator proteins, it binds directly to the 5'-end of the 23S rRNA, where it nucleates assembly of the 50S subunit.</text>
</comment>
<comment type="function">
    <text evidence="1">One of the proteins that surrounds the polypeptide exit tunnel on the outside of the subunit.</text>
</comment>
<comment type="subunit">
    <text evidence="1">Part of the 50S ribosomal subunit.</text>
</comment>
<comment type="similarity">
    <text evidence="1">Belongs to the universal ribosomal protein uL24 family.</text>
</comment>
<evidence type="ECO:0000255" key="1">
    <source>
        <dbReference type="HAMAP-Rule" id="MF_01326"/>
    </source>
</evidence>
<evidence type="ECO:0000305" key="2"/>
<reference key="1">
    <citation type="submission" date="2007-09" db="EMBL/GenBank/DDBJ databases">
        <title>Complete genome sequence of Rickettsia rickettsii.</title>
        <authorList>
            <person name="Madan A."/>
            <person name="Fahey J."/>
            <person name="Helton E."/>
            <person name="Ketteman M."/>
            <person name="Madan A."/>
            <person name="Rodrigues S."/>
            <person name="Sanchez A."/>
            <person name="Dasch G."/>
            <person name="Eremeeva M."/>
        </authorList>
    </citation>
    <scope>NUCLEOTIDE SEQUENCE [LARGE SCALE GENOMIC DNA]</scope>
    <source>
        <strain>Sheila Smith</strain>
    </source>
</reference>